<organism>
    <name type="scientific">Protochlamydia amoebophila (strain UWE25)</name>
    <dbReference type="NCBI Taxonomy" id="264201"/>
    <lineage>
        <taxon>Bacteria</taxon>
        <taxon>Pseudomonadati</taxon>
        <taxon>Chlamydiota</taxon>
        <taxon>Chlamydiia</taxon>
        <taxon>Parachlamydiales</taxon>
        <taxon>Parachlamydiaceae</taxon>
        <taxon>Candidatus Protochlamydia</taxon>
    </lineage>
</organism>
<proteinExistence type="inferred from homology"/>
<protein>
    <recommendedName>
        <fullName evidence="1">UDP-3-O-acylglucosamine N-acyltransferase</fullName>
        <ecNumber evidence="1">2.3.1.191</ecNumber>
    </recommendedName>
</protein>
<sequence length="349" mass="38001">MNEKKHFTLQELALLTDCKLVGNPSQIIKSVADLENASEEDASFFANNRYLQSLKESQAGVVFVDLQTPLIEGKNYLLSENPSRSFQHLIDTLYPQKKHPSGFTGIHTSAVIHPTAEIGNKVTICPQAVIDEGVKIGSGSFIGAGVYIGSYSEIGEDCTIHPRVVIREKCYLGNRVILQPGVVIGSCGFGYTTNQQGQHIKLNQVGNVWVENDVEIGANTTIDRARFKSTRIGQGTKIDNLVQIAHGVTIGSYNIIVSQTGIAGSTTTGKYVVIAGQAAIAGHLHLKDHVVVAGKSGVTKSLNTGKYSGIPAMPIKDYNRNQVFLRKIEIYINQIKNLEKRVLELESQN</sequence>
<keyword id="KW-0012">Acyltransferase</keyword>
<keyword id="KW-0441">Lipid A biosynthesis</keyword>
<keyword id="KW-0444">Lipid biosynthesis</keyword>
<keyword id="KW-0443">Lipid metabolism</keyword>
<keyword id="KW-1185">Reference proteome</keyword>
<keyword id="KW-0677">Repeat</keyword>
<keyword id="KW-0808">Transferase</keyword>
<feature type="chain" id="PRO_0000059685" description="UDP-3-O-acylglucosamine N-acyltransferase">
    <location>
        <begin position="1"/>
        <end position="349"/>
    </location>
</feature>
<feature type="active site" description="Proton acceptor" evidence="1">
    <location>
        <position position="246"/>
    </location>
</feature>
<name>LPXD_PARUW</name>
<dbReference type="EC" id="2.3.1.191" evidence="1"/>
<dbReference type="EMBL" id="BX908798">
    <property type="protein sequence ID" value="CAF24452.1"/>
    <property type="molecule type" value="Genomic_DNA"/>
</dbReference>
<dbReference type="RefSeq" id="WP_011176273.1">
    <property type="nucleotide sequence ID" value="NC_005861.2"/>
</dbReference>
<dbReference type="SMR" id="Q6MAE7"/>
<dbReference type="STRING" id="264201.pc1728"/>
<dbReference type="KEGG" id="pcu:PC_RS08275"/>
<dbReference type="eggNOG" id="COG1044">
    <property type="taxonomic scope" value="Bacteria"/>
</dbReference>
<dbReference type="HOGENOM" id="CLU_049865_0_0_0"/>
<dbReference type="OrthoDB" id="9784739at2"/>
<dbReference type="UniPathway" id="UPA00973"/>
<dbReference type="Proteomes" id="UP000000529">
    <property type="component" value="Chromosome"/>
</dbReference>
<dbReference type="GO" id="GO:0016020">
    <property type="term" value="C:membrane"/>
    <property type="evidence" value="ECO:0007669"/>
    <property type="project" value="GOC"/>
</dbReference>
<dbReference type="GO" id="GO:0016410">
    <property type="term" value="F:N-acyltransferase activity"/>
    <property type="evidence" value="ECO:0007669"/>
    <property type="project" value="InterPro"/>
</dbReference>
<dbReference type="GO" id="GO:0009245">
    <property type="term" value="P:lipid A biosynthetic process"/>
    <property type="evidence" value="ECO:0007669"/>
    <property type="project" value="UniProtKB-UniRule"/>
</dbReference>
<dbReference type="CDD" id="cd03352">
    <property type="entry name" value="LbH_LpxD"/>
    <property type="match status" value="1"/>
</dbReference>
<dbReference type="Gene3D" id="2.160.10.10">
    <property type="entry name" value="Hexapeptide repeat proteins"/>
    <property type="match status" value="1"/>
</dbReference>
<dbReference type="Gene3D" id="3.40.1390.10">
    <property type="entry name" value="MurE/MurF, N-terminal domain"/>
    <property type="match status" value="1"/>
</dbReference>
<dbReference type="HAMAP" id="MF_00523">
    <property type="entry name" value="LpxD"/>
    <property type="match status" value="1"/>
</dbReference>
<dbReference type="InterPro" id="IPR001451">
    <property type="entry name" value="Hexapep"/>
</dbReference>
<dbReference type="InterPro" id="IPR018357">
    <property type="entry name" value="Hexapep_transf_CS"/>
</dbReference>
<dbReference type="InterPro" id="IPR007691">
    <property type="entry name" value="LpxD"/>
</dbReference>
<dbReference type="InterPro" id="IPR011004">
    <property type="entry name" value="Trimer_LpxA-like_sf"/>
</dbReference>
<dbReference type="InterPro" id="IPR020573">
    <property type="entry name" value="UDP_GlcNAc_AcTrfase_non-rep"/>
</dbReference>
<dbReference type="NCBIfam" id="TIGR01853">
    <property type="entry name" value="lipid_A_lpxD"/>
    <property type="match status" value="1"/>
</dbReference>
<dbReference type="NCBIfam" id="NF002060">
    <property type="entry name" value="PRK00892.1"/>
    <property type="match status" value="1"/>
</dbReference>
<dbReference type="PANTHER" id="PTHR43378">
    <property type="entry name" value="UDP-3-O-ACYLGLUCOSAMINE N-ACYLTRANSFERASE"/>
    <property type="match status" value="1"/>
</dbReference>
<dbReference type="PANTHER" id="PTHR43378:SF2">
    <property type="entry name" value="UDP-3-O-ACYLGLUCOSAMINE N-ACYLTRANSFERASE 1, MITOCHONDRIAL-RELATED"/>
    <property type="match status" value="1"/>
</dbReference>
<dbReference type="Pfam" id="PF00132">
    <property type="entry name" value="Hexapep"/>
    <property type="match status" value="3"/>
</dbReference>
<dbReference type="Pfam" id="PF04613">
    <property type="entry name" value="LpxD"/>
    <property type="match status" value="1"/>
</dbReference>
<dbReference type="SUPFAM" id="SSF51161">
    <property type="entry name" value="Trimeric LpxA-like enzymes"/>
    <property type="match status" value="1"/>
</dbReference>
<dbReference type="PROSITE" id="PS00101">
    <property type="entry name" value="HEXAPEP_TRANSFERASES"/>
    <property type="match status" value="1"/>
</dbReference>
<accession>Q6MAE7</accession>
<evidence type="ECO:0000255" key="1">
    <source>
        <dbReference type="HAMAP-Rule" id="MF_00523"/>
    </source>
</evidence>
<reference key="1">
    <citation type="journal article" date="2004" name="Science">
        <title>Illuminating the evolutionary history of chlamydiae.</title>
        <authorList>
            <person name="Horn M."/>
            <person name="Collingro A."/>
            <person name="Schmitz-Esser S."/>
            <person name="Beier C.L."/>
            <person name="Purkhold U."/>
            <person name="Fartmann B."/>
            <person name="Brandt P."/>
            <person name="Nyakatura G.J."/>
            <person name="Droege M."/>
            <person name="Frishman D."/>
            <person name="Rattei T."/>
            <person name="Mewes H.-W."/>
            <person name="Wagner M."/>
        </authorList>
    </citation>
    <scope>NUCLEOTIDE SEQUENCE [LARGE SCALE GENOMIC DNA]</scope>
    <source>
        <strain>UWE25</strain>
    </source>
</reference>
<gene>
    <name evidence="1" type="primary">lpxD</name>
    <name type="ordered locus">pc1728</name>
</gene>
<comment type="function">
    <text evidence="1">Catalyzes the N-acylation of UDP-3-O-acylglucosamine using 3-hydroxyacyl-ACP as the acyl donor. Is involved in the biosynthesis of lipid A, a phosphorylated glycolipid that anchors the lipopolysaccharide to the outer membrane of the cell.</text>
</comment>
<comment type="catalytic activity">
    <reaction evidence="1">
        <text>a UDP-3-O-[(3R)-3-hydroxyacyl]-alpha-D-glucosamine + a (3R)-hydroxyacyl-[ACP] = a UDP-2-N,3-O-bis[(3R)-3-hydroxyacyl]-alpha-D-glucosamine + holo-[ACP] + H(+)</text>
        <dbReference type="Rhea" id="RHEA:53836"/>
        <dbReference type="Rhea" id="RHEA-COMP:9685"/>
        <dbReference type="Rhea" id="RHEA-COMP:9945"/>
        <dbReference type="ChEBI" id="CHEBI:15378"/>
        <dbReference type="ChEBI" id="CHEBI:64479"/>
        <dbReference type="ChEBI" id="CHEBI:78827"/>
        <dbReference type="ChEBI" id="CHEBI:137740"/>
        <dbReference type="ChEBI" id="CHEBI:137748"/>
        <dbReference type="EC" id="2.3.1.191"/>
    </reaction>
</comment>
<comment type="pathway">
    <text evidence="1">Bacterial outer membrane biogenesis; LPS lipid A biosynthesis.</text>
</comment>
<comment type="subunit">
    <text evidence="1">Homotrimer.</text>
</comment>
<comment type="similarity">
    <text evidence="1">Belongs to the transferase hexapeptide repeat family. LpxD subfamily.</text>
</comment>